<comment type="function">
    <text evidence="1">Isomerase that catalyzes the conversion of deoxy-ribose 1-phosphate (dRib-1-P) and ribose 1-phosphate (Rib-1-P) to deoxy-ribose 5-phosphate (dRib-5-P) and ribose 5-phosphate (Rib-5-P), respectively.</text>
</comment>
<comment type="catalytic activity">
    <reaction evidence="1">
        <text>2-deoxy-alpha-D-ribose 1-phosphate = 2-deoxy-D-ribose 5-phosphate</text>
        <dbReference type="Rhea" id="RHEA:27658"/>
        <dbReference type="ChEBI" id="CHEBI:57259"/>
        <dbReference type="ChEBI" id="CHEBI:62877"/>
        <dbReference type="EC" id="5.4.2.7"/>
    </reaction>
</comment>
<comment type="catalytic activity">
    <reaction evidence="1">
        <text>alpha-D-ribose 1-phosphate = D-ribose 5-phosphate</text>
        <dbReference type="Rhea" id="RHEA:18793"/>
        <dbReference type="ChEBI" id="CHEBI:57720"/>
        <dbReference type="ChEBI" id="CHEBI:78346"/>
        <dbReference type="EC" id="5.4.2.7"/>
    </reaction>
</comment>
<comment type="cofactor">
    <cofactor evidence="1">
        <name>Mn(2+)</name>
        <dbReference type="ChEBI" id="CHEBI:29035"/>
    </cofactor>
    <text evidence="1">Binds 2 manganese ions.</text>
</comment>
<comment type="pathway">
    <text evidence="1">Carbohydrate degradation; 2-deoxy-D-ribose 1-phosphate degradation; D-glyceraldehyde 3-phosphate and acetaldehyde from 2-deoxy-alpha-D-ribose 1-phosphate: step 1/2.</text>
</comment>
<comment type="subcellular location">
    <subcellularLocation>
        <location evidence="1">Cytoplasm</location>
    </subcellularLocation>
</comment>
<comment type="similarity">
    <text evidence="1">Belongs to the phosphopentomutase family.</text>
</comment>
<proteinExistence type="inferred from homology"/>
<accession>Q5X7B2</accession>
<feature type="chain" id="PRO_0000258292" description="Phosphopentomutase">
    <location>
        <begin position="1"/>
        <end position="407"/>
    </location>
</feature>
<feature type="binding site" evidence="1">
    <location>
        <position position="11"/>
    </location>
    <ligand>
        <name>Mn(2+)</name>
        <dbReference type="ChEBI" id="CHEBI:29035"/>
        <label>1</label>
    </ligand>
</feature>
<feature type="binding site" evidence="1">
    <location>
        <position position="305"/>
    </location>
    <ligand>
        <name>Mn(2+)</name>
        <dbReference type="ChEBI" id="CHEBI:29035"/>
        <label>2</label>
    </ligand>
</feature>
<feature type="binding site" evidence="1">
    <location>
        <position position="310"/>
    </location>
    <ligand>
        <name>Mn(2+)</name>
        <dbReference type="ChEBI" id="CHEBI:29035"/>
        <label>2</label>
    </ligand>
</feature>
<feature type="binding site" evidence="1">
    <location>
        <position position="346"/>
    </location>
    <ligand>
        <name>Mn(2+)</name>
        <dbReference type="ChEBI" id="CHEBI:29035"/>
        <label>1</label>
    </ligand>
</feature>
<feature type="binding site" evidence="1">
    <location>
        <position position="347"/>
    </location>
    <ligand>
        <name>Mn(2+)</name>
        <dbReference type="ChEBI" id="CHEBI:29035"/>
        <label>1</label>
    </ligand>
</feature>
<feature type="binding site" evidence="1">
    <location>
        <position position="358"/>
    </location>
    <ligand>
        <name>Mn(2+)</name>
        <dbReference type="ChEBI" id="CHEBI:29035"/>
        <label>2</label>
    </ligand>
</feature>
<reference key="1">
    <citation type="journal article" date="2004" name="Nat. Genet.">
        <title>Evidence in the Legionella pneumophila genome for exploitation of host cell functions and high genome plasticity.</title>
        <authorList>
            <person name="Cazalet C."/>
            <person name="Rusniok C."/>
            <person name="Brueggemann H."/>
            <person name="Zidane N."/>
            <person name="Magnier A."/>
            <person name="Ma L."/>
            <person name="Tichit M."/>
            <person name="Jarraud S."/>
            <person name="Bouchier C."/>
            <person name="Vandenesch F."/>
            <person name="Kunst F."/>
            <person name="Etienne J."/>
            <person name="Glaser P."/>
            <person name="Buchrieser C."/>
        </authorList>
    </citation>
    <scope>NUCLEOTIDE SEQUENCE [LARGE SCALE GENOMIC DNA]</scope>
    <source>
        <strain>Paris</strain>
    </source>
</reference>
<gene>
    <name evidence="1" type="primary">deoB</name>
    <name type="ordered locus">lpp0693</name>
</gene>
<dbReference type="EC" id="5.4.2.7" evidence="1"/>
<dbReference type="EMBL" id="CR628336">
    <property type="protein sequence ID" value="CAH11841.1"/>
    <property type="molecule type" value="Genomic_DNA"/>
</dbReference>
<dbReference type="RefSeq" id="WP_011213229.1">
    <property type="nucleotide sequence ID" value="NC_006368.1"/>
</dbReference>
<dbReference type="SMR" id="Q5X7B2"/>
<dbReference type="KEGG" id="lpp:lpp0693"/>
<dbReference type="LegioList" id="lpp0693"/>
<dbReference type="HOGENOM" id="CLU_053861_0_0_6"/>
<dbReference type="UniPathway" id="UPA00002">
    <property type="reaction ID" value="UER00467"/>
</dbReference>
<dbReference type="GO" id="GO:0005829">
    <property type="term" value="C:cytosol"/>
    <property type="evidence" value="ECO:0007669"/>
    <property type="project" value="TreeGrafter"/>
</dbReference>
<dbReference type="GO" id="GO:0000287">
    <property type="term" value="F:magnesium ion binding"/>
    <property type="evidence" value="ECO:0007669"/>
    <property type="project" value="InterPro"/>
</dbReference>
<dbReference type="GO" id="GO:0030145">
    <property type="term" value="F:manganese ion binding"/>
    <property type="evidence" value="ECO:0007669"/>
    <property type="project" value="UniProtKB-UniRule"/>
</dbReference>
<dbReference type="GO" id="GO:0008973">
    <property type="term" value="F:phosphopentomutase activity"/>
    <property type="evidence" value="ECO:0007669"/>
    <property type="project" value="UniProtKB-UniRule"/>
</dbReference>
<dbReference type="GO" id="GO:0006018">
    <property type="term" value="P:2-deoxyribose 1-phosphate catabolic process"/>
    <property type="evidence" value="ECO:0007669"/>
    <property type="project" value="UniProtKB-UniRule"/>
</dbReference>
<dbReference type="GO" id="GO:0006015">
    <property type="term" value="P:5-phosphoribose 1-diphosphate biosynthetic process"/>
    <property type="evidence" value="ECO:0007669"/>
    <property type="project" value="UniProtKB-UniPathway"/>
</dbReference>
<dbReference type="GO" id="GO:0043094">
    <property type="term" value="P:metabolic compound salvage"/>
    <property type="evidence" value="ECO:0007669"/>
    <property type="project" value="InterPro"/>
</dbReference>
<dbReference type="GO" id="GO:0009117">
    <property type="term" value="P:nucleotide metabolic process"/>
    <property type="evidence" value="ECO:0007669"/>
    <property type="project" value="InterPro"/>
</dbReference>
<dbReference type="CDD" id="cd16009">
    <property type="entry name" value="PPM"/>
    <property type="match status" value="1"/>
</dbReference>
<dbReference type="FunFam" id="3.30.70.1250:FF:000001">
    <property type="entry name" value="Phosphopentomutase"/>
    <property type="match status" value="1"/>
</dbReference>
<dbReference type="Gene3D" id="3.40.720.10">
    <property type="entry name" value="Alkaline Phosphatase, subunit A"/>
    <property type="match status" value="1"/>
</dbReference>
<dbReference type="Gene3D" id="3.30.70.1250">
    <property type="entry name" value="Phosphopentomutase"/>
    <property type="match status" value="1"/>
</dbReference>
<dbReference type="HAMAP" id="MF_00740">
    <property type="entry name" value="Phosphopentomut"/>
    <property type="match status" value="1"/>
</dbReference>
<dbReference type="InterPro" id="IPR017850">
    <property type="entry name" value="Alkaline_phosphatase_core_sf"/>
</dbReference>
<dbReference type="InterPro" id="IPR010045">
    <property type="entry name" value="DeoB"/>
</dbReference>
<dbReference type="InterPro" id="IPR006124">
    <property type="entry name" value="Metalloenzyme"/>
</dbReference>
<dbReference type="InterPro" id="IPR024052">
    <property type="entry name" value="Phosphopentomutase_DeoB_cap_sf"/>
</dbReference>
<dbReference type="NCBIfam" id="TIGR01696">
    <property type="entry name" value="deoB"/>
    <property type="match status" value="1"/>
</dbReference>
<dbReference type="NCBIfam" id="NF003766">
    <property type="entry name" value="PRK05362.1"/>
    <property type="match status" value="1"/>
</dbReference>
<dbReference type="PANTHER" id="PTHR21110">
    <property type="entry name" value="PHOSPHOPENTOMUTASE"/>
    <property type="match status" value="1"/>
</dbReference>
<dbReference type="PANTHER" id="PTHR21110:SF0">
    <property type="entry name" value="PHOSPHOPENTOMUTASE"/>
    <property type="match status" value="1"/>
</dbReference>
<dbReference type="Pfam" id="PF01676">
    <property type="entry name" value="Metalloenzyme"/>
    <property type="match status" value="1"/>
</dbReference>
<dbReference type="PIRSF" id="PIRSF001491">
    <property type="entry name" value="Ppentomutase"/>
    <property type="match status" value="1"/>
</dbReference>
<dbReference type="SUPFAM" id="SSF53649">
    <property type="entry name" value="Alkaline phosphatase-like"/>
    <property type="match status" value="1"/>
</dbReference>
<dbReference type="SUPFAM" id="SSF143856">
    <property type="entry name" value="DeoB insert domain-like"/>
    <property type="match status" value="1"/>
</dbReference>
<organism>
    <name type="scientific">Legionella pneumophila (strain Paris)</name>
    <dbReference type="NCBI Taxonomy" id="297246"/>
    <lineage>
        <taxon>Bacteria</taxon>
        <taxon>Pseudomonadati</taxon>
        <taxon>Pseudomonadota</taxon>
        <taxon>Gammaproteobacteria</taxon>
        <taxon>Legionellales</taxon>
        <taxon>Legionellaceae</taxon>
        <taxon>Legionella</taxon>
    </lineage>
</organism>
<evidence type="ECO:0000255" key="1">
    <source>
        <dbReference type="HAMAP-Rule" id="MF_00740"/>
    </source>
</evidence>
<name>DEOB_LEGPA</name>
<sequence>MTGRVCVLVMDSFGIGASLDAARYGDAGANTLVHIYEACKRGECDIDGVRKGPLMLPNLAGKGLYHAAMASSGLPFIDLSALAIPSGYYGYAVEQSLGKDTPSGHWEMAGVPVTFEWGYFPDKSYCFPEELISEFIKQCNLPGVLGEKHASGTIIIDELGEEHIRTGKPIVYTSADSVFQIAAHEEAFGLQRLYDICKIARNLVDKYQIGRVIARPFTGKPGSFKRTGNRKDYATPPPEKTLLDFLKEDGREVIAIGKIADIYAHQGVTQEIKADGNMALFDATLSAMKTAPQGSLVFTNFVDFDSSYGHRRDVAGYAHALEQFDVRLPELEALLQPDDMVFIAADHGCDPTFPGSDHTREHIPVLMFGPQVNSKFIGRRDCFADIGQSIAEHLQLSSPLTHGVSFL</sequence>
<protein>
    <recommendedName>
        <fullName evidence="1">Phosphopentomutase</fullName>
        <ecNumber evidence="1">5.4.2.7</ecNumber>
    </recommendedName>
    <alternativeName>
        <fullName evidence="1">Phosphodeoxyribomutase</fullName>
    </alternativeName>
</protein>
<keyword id="KW-0963">Cytoplasm</keyword>
<keyword id="KW-0413">Isomerase</keyword>
<keyword id="KW-0464">Manganese</keyword>
<keyword id="KW-0479">Metal-binding</keyword>